<accession>Q8HQT4</accession>
<organism>
    <name type="scientific">Pinus rigida</name>
    <name type="common">Pitch pine</name>
    <dbReference type="NCBI Taxonomy" id="164242"/>
    <lineage>
        <taxon>Eukaryota</taxon>
        <taxon>Viridiplantae</taxon>
        <taxon>Streptophyta</taxon>
        <taxon>Embryophyta</taxon>
        <taxon>Tracheophyta</taxon>
        <taxon>Spermatophyta</taxon>
        <taxon>Pinopsida</taxon>
        <taxon>Pinidae</taxon>
        <taxon>Conifers I</taxon>
        <taxon>Pinales</taxon>
        <taxon>Pinaceae</taxon>
        <taxon>Pinus</taxon>
        <taxon>Pinus subgen. Pinus</taxon>
    </lineage>
</organism>
<evidence type="ECO:0000255" key="1">
    <source>
        <dbReference type="HAMAP-Rule" id="MF_01390"/>
    </source>
</evidence>
<name>MATK_PINRI</name>
<dbReference type="EMBL" id="AB080929">
    <property type="protein sequence ID" value="BAC11932.1"/>
    <property type="molecule type" value="Genomic_DNA"/>
</dbReference>
<dbReference type="GO" id="GO:0009507">
    <property type="term" value="C:chloroplast"/>
    <property type="evidence" value="ECO:0007669"/>
    <property type="project" value="UniProtKB-SubCell"/>
</dbReference>
<dbReference type="GO" id="GO:0003723">
    <property type="term" value="F:RNA binding"/>
    <property type="evidence" value="ECO:0007669"/>
    <property type="project" value="UniProtKB-KW"/>
</dbReference>
<dbReference type="GO" id="GO:0006397">
    <property type="term" value="P:mRNA processing"/>
    <property type="evidence" value="ECO:0007669"/>
    <property type="project" value="UniProtKB-KW"/>
</dbReference>
<dbReference type="GO" id="GO:0008380">
    <property type="term" value="P:RNA splicing"/>
    <property type="evidence" value="ECO:0007669"/>
    <property type="project" value="UniProtKB-UniRule"/>
</dbReference>
<dbReference type="GO" id="GO:0008033">
    <property type="term" value="P:tRNA processing"/>
    <property type="evidence" value="ECO:0007669"/>
    <property type="project" value="UniProtKB-KW"/>
</dbReference>
<dbReference type="HAMAP" id="MF_01390">
    <property type="entry name" value="MatK"/>
    <property type="match status" value="1"/>
</dbReference>
<dbReference type="InterPro" id="IPR024937">
    <property type="entry name" value="Domain_X"/>
</dbReference>
<dbReference type="InterPro" id="IPR002866">
    <property type="entry name" value="Maturase_MatK"/>
</dbReference>
<dbReference type="InterPro" id="IPR024942">
    <property type="entry name" value="Maturase_MatK_N"/>
</dbReference>
<dbReference type="PANTHER" id="PTHR34811">
    <property type="entry name" value="MATURASE K"/>
    <property type="match status" value="1"/>
</dbReference>
<dbReference type="PANTHER" id="PTHR34811:SF1">
    <property type="entry name" value="MATURASE K"/>
    <property type="match status" value="1"/>
</dbReference>
<dbReference type="Pfam" id="PF01348">
    <property type="entry name" value="Intron_maturas2"/>
    <property type="match status" value="1"/>
</dbReference>
<dbReference type="Pfam" id="PF01824">
    <property type="entry name" value="MatK_N"/>
    <property type="match status" value="1"/>
</dbReference>
<geneLocation type="chloroplast"/>
<gene>
    <name evidence="1" type="primary">matK</name>
</gene>
<comment type="function">
    <text evidence="1">Usually encoded in the trnK tRNA gene intron. Probably assists in splicing its own and other chloroplast group II introns.</text>
</comment>
<comment type="subcellular location">
    <subcellularLocation>
        <location>Plastid</location>
        <location>Chloroplast</location>
    </subcellularLocation>
</comment>
<comment type="similarity">
    <text evidence="1">Belongs to the intron maturase 2 family. MatK subfamily.</text>
</comment>
<keyword id="KW-0150">Chloroplast</keyword>
<keyword id="KW-0507">mRNA processing</keyword>
<keyword id="KW-0934">Plastid</keyword>
<keyword id="KW-0694">RNA-binding</keyword>
<keyword id="KW-0819">tRNA processing</keyword>
<feature type="chain" id="PRO_0000143629" description="Maturase K">
    <location>
        <begin position="1"/>
        <end position="515"/>
    </location>
</feature>
<sequence length="515" mass="60966">MDEFHRCGKEDSFWQQCFLYPLFFQEDLYAISHDHYLDVSSSSRPMEHLSSNDQLSFLTVKRLIGQIRQQNHSIVLFVNCDPNPLADRKKSFYSESVLEALTLVLEVPFSIWSKSSVEGMNESKSFRSIHSIFPFLEDKFPHSNSILDARIPYSIHPEILVRTFRRWIRDAPSLHPLRSVLYEYRNSPDNLQRSIIVVPRVNTRFFLFLWNYYVCECESILFSRLKRSSHSRSLSHGSFPHRTHFHRKIKHIIIFSRRNSLKSIWSLKDPKIHYVRYGERPIIAIKGAHLLVKKCRYYLLIFRQFYFHLWSEPYRVCSHQLSKNCSSSPGYFLRVRMNPILVRTKMLDELFIADLITDEIDPIVPIVPIIGLLATEKFCDISGRPISKLSWTSLTDDDILDRFDQIWRNLFHYYSGSFDRDGLYRIKYILSLSCAKTLACKHKSTIRVVRKELGPELFKKSFSKEREFYSLRFSSKAAARSQRERIWHSDIPQINPLANSWQKIQDLKIENLFDQ</sequence>
<reference key="1">
    <citation type="submission" date="2002-03" db="EMBL/GenBank/DDBJ databases">
        <title>Phylogeny of the North American pines.</title>
        <authorList>
            <person name="Geada Lopez G."/>
            <person name="Kamiya K."/>
            <person name="Harada K."/>
        </authorList>
    </citation>
    <scope>NUCLEOTIDE SEQUENCE [GENOMIC DNA]</scope>
    <source>
        <tissue>Leaf</tissue>
    </source>
</reference>
<protein>
    <recommendedName>
        <fullName evidence="1">Maturase K</fullName>
    </recommendedName>
    <alternativeName>
        <fullName evidence="1">Intron maturase</fullName>
    </alternativeName>
</protein>
<proteinExistence type="inferred from homology"/>